<organism>
    <name type="scientific">Ceratotherium simum</name>
    <name type="common">White rhinoceros</name>
    <name type="synonym">Square-lipped rhinoceros</name>
    <dbReference type="NCBI Taxonomy" id="9807"/>
    <lineage>
        <taxon>Eukaryota</taxon>
        <taxon>Metazoa</taxon>
        <taxon>Chordata</taxon>
        <taxon>Craniata</taxon>
        <taxon>Vertebrata</taxon>
        <taxon>Euteleostomi</taxon>
        <taxon>Mammalia</taxon>
        <taxon>Eutheria</taxon>
        <taxon>Laurasiatheria</taxon>
        <taxon>Perissodactyla</taxon>
        <taxon>Rhinocerotidae</taxon>
        <taxon>Ceratotherium</taxon>
    </lineage>
</organism>
<geneLocation type="mitochondrion"/>
<protein>
    <recommendedName>
        <fullName>NADH-ubiquinone oxidoreductase chain 4L</fullName>
        <ecNumber>7.1.1.2</ecNumber>
    </recommendedName>
    <alternativeName>
        <fullName>NADH dehydrogenase subunit 4L</fullName>
    </alternativeName>
</protein>
<comment type="function">
    <text evidence="1">Core subunit of the mitochondrial membrane respiratory chain NADH dehydrogenase (Complex I) which catalyzes electron transfer from NADH through the respiratory chain, using ubiquinone as an electron acceptor. Part of the enzyme membrane arm which is embedded in the lipid bilayer and involved in proton translocation.</text>
</comment>
<comment type="catalytic activity">
    <reaction evidence="1">
        <text>a ubiquinone + NADH + 5 H(+)(in) = a ubiquinol + NAD(+) + 4 H(+)(out)</text>
        <dbReference type="Rhea" id="RHEA:29091"/>
        <dbReference type="Rhea" id="RHEA-COMP:9565"/>
        <dbReference type="Rhea" id="RHEA-COMP:9566"/>
        <dbReference type="ChEBI" id="CHEBI:15378"/>
        <dbReference type="ChEBI" id="CHEBI:16389"/>
        <dbReference type="ChEBI" id="CHEBI:17976"/>
        <dbReference type="ChEBI" id="CHEBI:57540"/>
        <dbReference type="ChEBI" id="CHEBI:57945"/>
        <dbReference type="EC" id="7.1.1.2"/>
    </reaction>
    <physiologicalReaction direction="left-to-right" evidence="1">
        <dbReference type="Rhea" id="RHEA:29092"/>
    </physiologicalReaction>
</comment>
<comment type="subunit">
    <text evidence="2">Core subunit of respiratory chain NADH dehydrogenase (Complex I) which is composed of 45 different subunits.</text>
</comment>
<comment type="subcellular location">
    <subcellularLocation>
        <location evidence="2">Mitochondrion inner membrane</location>
        <topology evidence="3">Multi-pass membrane protein</topology>
    </subcellularLocation>
</comment>
<comment type="similarity">
    <text evidence="4">Belongs to the complex I subunit 4L family.</text>
</comment>
<feature type="chain" id="PRO_0000118406" description="NADH-ubiquinone oxidoreductase chain 4L">
    <location>
        <begin position="1"/>
        <end position="98"/>
    </location>
</feature>
<feature type="transmembrane region" description="Helical" evidence="3">
    <location>
        <begin position="1"/>
        <end position="21"/>
    </location>
</feature>
<feature type="transmembrane region" description="Helical" evidence="3">
    <location>
        <begin position="29"/>
        <end position="49"/>
    </location>
</feature>
<feature type="transmembrane region" description="Helical" evidence="3">
    <location>
        <begin position="61"/>
        <end position="81"/>
    </location>
</feature>
<sequence>MSLIHINVFLAFTTSLMGLLMYRSHLMSSLLCLEGMMLSLFIMATMMVLNSHFTLASMMPIILLVFAACEAALGLSLLVMISNTYGTDYVQNLNLLQC</sequence>
<name>NU4LM_CERSI</name>
<accession>O03203</accession>
<keyword id="KW-0249">Electron transport</keyword>
<keyword id="KW-0472">Membrane</keyword>
<keyword id="KW-0496">Mitochondrion</keyword>
<keyword id="KW-0999">Mitochondrion inner membrane</keyword>
<keyword id="KW-0520">NAD</keyword>
<keyword id="KW-0679">Respiratory chain</keyword>
<keyword id="KW-1278">Translocase</keyword>
<keyword id="KW-0812">Transmembrane</keyword>
<keyword id="KW-1133">Transmembrane helix</keyword>
<keyword id="KW-0813">Transport</keyword>
<keyword id="KW-0830">Ubiquinone</keyword>
<reference key="1">
    <citation type="journal article" date="1997" name="Mol. Phylogenet. Evol.">
        <title>The complete mitochondrial DNA sequence of the white rhinoceros, Ceratotherium simum, and comparison with the mtDNA sequence of the Indian rhinoceros, Rhinoceros unicornis.</title>
        <authorList>
            <person name="Xu X."/>
            <person name="Arnason U."/>
        </authorList>
    </citation>
    <scope>NUCLEOTIDE SEQUENCE [GENOMIC DNA]</scope>
</reference>
<proteinExistence type="inferred from homology"/>
<evidence type="ECO:0000250" key="1">
    <source>
        <dbReference type="UniProtKB" id="P03901"/>
    </source>
</evidence>
<evidence type="ECO:0000250" key="2">
    <source>
        <dbReference type="UniProtKB" id="P03902"/>
    </source>
</evidence>
<evidence type="ECO:0000255" key="3"/>
<evidence type="ECO:0000305" key="4"/>
<gene>
    <name type="primary">MT-ND4L</name>
    <name type="synonym">MTND4L</name>
    <name type="synonym">NADH4L</name>
    <name type="synonym">ND4L</name>
</gene>
<dbReference type="EC" id="7.1.1.2"/>
<dbReference type="EMBL" id="Y07726">
    <property type="protein sequence ID" value="CAA69014.1"/>
    <property type="molecule type" value="Genomic_DNA"/>
</dbReference>
<dbReference type="RefSeq" id="NP_007441.1">
    <property type="nucleotide sequence ID" value="NC_001808.1"/>
</dbReference>
<dbReference type="SMR" id="O03203"/>
<dbReference type="GeneID" id="808107"/>
<dbReference type="CTD" id="4539"/>
<dbReference type="OMA" id="MYRSHLM"/>
<dbReference type="GO" id="GO:0005743">
    <property type="term" value="C:mitochondrial inner membrane"/>
    <property type="evidence" value="ECO:0000250"/>
    <property type="project" value="UniProtKB"/>
</dbReference>
<dbReference type="GO" id="GO:0045271">
    <property type="term" value="C:respiratory chain complex I"/>
    <property type="evidence" value="ECO:0000250"/>
    <property type="project" value="UniProtKB"/>
</dbReference>
<dbReference type="GO" id="GO:0008137">
    <property type="term" value="F:NADH dehydrogenase (ubiquinone) activity"/>
    <property type="evidence" value="ECO:0000250"/>
    <property type="project" value="UniProtKB"/>
</dbReference>
<dbReference type="GO" id="GO:0042773">
    <property type="term" value="P:ATP synthesis coupled electron transport"/>
    <property type="evidence" value="ECO:0007669"/>
    <property type="project" value="InterPro"/>
</dbReference>
<dbReference type="FunFam" id="1.10.287.3510:FF:000002">
    <property type="entry name" value="NADH-ubiquinone oxidoreductase chain 4L"/>
    <property type="match status" value="1"/>
</dbReference>
<dbReference type="Gene3D" id="1.10.287.3510">
    <property type="match status" value="1"/>
</dbReference>
<dbReference type="InterPro" id="IPR001133">
    <property type="entry name" value="NADH_UbQ_OxRdtase_chain4L/K"/>
</dbReference>
<dbReference type="InterPro" id="IPR039428">
    <property type="entry name" value="NUOK/Mnh_C1-like"/>
</dbReference>
<dbReference type="PANTHER" id="PTHR11434:SF0">
    <property type="entry name" value="NADH-UBIQUINONE OXIDOREDUCTASE CHAIN 4L"/>
    <property type="match status" value="1"/>
</dbReference>
<dbReference type="PANTHER" id="PTHR11434">
    <property type="entry name" value="NADH-UBIQUINONE OXIDOREDUCTASE SUBUNIT ND4L"/>
    <property type="match status" value="1"/>
</dbReference>
<dbReference type="Pfam" id="PF00420">
    <property type="entry name" value="Oxidored_q2"/>
    <property type="match status" value="1"/>
</dbReference>